<gene>
    <name type="ordered locus">Maeo_0343</name>
</gene>
<comment type="similarity">
    <text evidence="1">Belongs to the UPF0280 family.</text>
</comment>
<dbReference type="EMBL" id="CP000743">
    <property type="protein sequence ID" value="ABR55930.1"/>
    <property type="molecule type" value="Genomic_DNA"/>
</dbReference>
<dbReference type="RefSeq" id="WP_011973062.1">
    <property type="nucleotide sequence ID" value="NC_009635.1"/>
</dbReference>
<dbReference type="SMR" id="A6UTV8"/>
<dbReference type="STRING" id="419665.Maeo_0343"/>
<dbReference type="GeneID" id="5326717"/>
<dbReference type="KEGG" id="mae:Maeo_0343"/>
<dbReference type="eggNOG" id="arCOG04376">
    <property type="taxonomic scope" value="Archaea"/>
</dbReference>
<dbReference type="HOGENOM" id="CLU_074757_0_0_2"/>
<dbReference type="OrthoDB" id="50299at2157"/>
<dbReference type="Proteomes" id="UP000001106">
    <property type="component" value="Chromosome"/>
</dbReference>
<dbReference type="Gene3D" id="3.10.520.10">
    <property type="entry name" value="ApbE-like domains"/>
    <property type="match status" value="1"/>
</dbReference>
<dbReference type="HAMAP" id="MF_01079">
    <property type="entry name" value="UPF0280"/>
    <property type="match status" value="1"/>
</dbReference>
<dbReference type="InterPro" id="IPR003374">
    <property type="entry name" value="ApbE-like_sf"/>
</dbReference>
<dbReference type="InterPro" id="IPR037456">
    <property type="entry name" value="MA1715-like"/>
</dbReference>
<dbReference type="InterPro" id="IPR007183">
    <property type="entry name" value="UPF0280"/>
</dbReference>
<dbReference type="NCBIfam" id="NF003321">
    <property type="entry name" value="PRK04334.1-1"/>
    <property type="match status" value="1"/>
</dbReference>
<dbReference type="PIRSF" id="PIRSF006421">
    <property type="entry name" value="UCP006421"/>
    <property type="match status" value="1"/>
</dbReference>
<dbReference type="SUPFAM" id="SSF143631">
    <property type="entry name" value="ApbE-like"/>
    <property type="match status" value="1"/>
</dbReference>
<feature type="chain" id="PRO_0000366701" description="UPF0280 protein Maeo_0343">
    <location>
        <begin position="1"/>
        <end position="248"/>
    </location>
</feature>
<reference key="1">
    <citation type="submission" date="2007-06" db="EMBL/GenBank/DDBJ databases">
        <title>Complete sequence of Methanococcus aeolicus Nankai-3.</title>
        <authorList>
            <consortium name="US DOE Joint Genome Institute"/>
            <person name="Copeland A."/>
            <person name="Lucas S."/>
            <person name="Lapidus A."/>
            <person name="Barry K."/>
            <person name="Glavina del Rio T."/>
            <person name="Dalin E."/>
            <person name="Tice H."/>
            <person name="Pitluck S."/>
            <person name="Chain P."/>
            <person name="Malfatti S."/>
            <person name="Shin M."/>
            <person name="Vergez L."/>
            <person name="Schmutz J."/>
            <person name="Larimer F."/>
            <person name="Land M."/>
            <person name="Hauser L."/>
            <person name="Kyrpides N."/>
            <person name="Lykidis A."/>
            <person name="Sieprawska-Lupa M."/>
            <person name="Whitman W.B."/>
            <person name="Richardson P."/>
        </authorList>
    </citation>
    <scope>NUCLEOTIDE SEQUENCE [LARGE SCALE GENOMIC DNA]</scope>
    <source>
        <strain>ATCC BAA-1280 / DSM 17508 / OCM 812 / Nankai-3</strain>
    </source>
</reference>
<accession>A6UTV8</accession>
<protein>
    <recommendedName>
        <fullName evidence="1">UPF0280 protein Maeo_0343</fullName>
    </recommendedName>
</protein>
<evidence type="ECO:0000255" key="1">
    <source>
        <dbReference type="HAMAP-Rule" id="MF_01079"/>
    </source>
</evidence>
<proteinExistence type="inferred from homology"/>
<sequence>MIHKKISIMETNINLKVDDDKYINLAKNTILRERANIQNYILDYPEFLTSYTPIKVSPDAPAIVKTMAKAGEIAAVGPMASVAGTISEFIVKNAVEYGCKNIISENGGDIALKTEKSVVVGLYAGSSPLSYTIGFKINEDKANNGYGVCTSSGTVGHSVSFGNADAIVVFAKKASIADASATSIGNFAVGAPDDAINKCLEKAEDIEYIDGVFVVMGEFAGKMGKIPQMVKTDEKIVKTSMGEYFDMI</sequence>
<organism>
    <name type="scientific">Methanococcus aeolicus (strain ATCC BAA-1280 / DSM 17508 / OCM 812 / Nankai-3)</name>
    <dbReference type="NCBI Taxonomy" id="419665"/>
    <lineage>
        <taxon>Archaea</taxon>
        <taxon>Methanobacteriati</taxon>
        <taxon>Methanobacteriota</taxon>
        <taxon>Methanomada group</taxon>
        <taxon>Methanococci</taxon>
        <taxon>Methanococcales</taxon>
        <taxon>Methanococcaceae</taxon>
        <taxon>Methanococcus</taxon>
    </lineage>
</organism>
<name>Y343_META3</name>